<name>GLMU_BACHK</name>
<reference key="1">
    <citation type="journal article" date="2006" name="J. Bacteriol.">
        <title>Pathogenomic sequence analysis of Bacillus cereus and Bacillus thuringiensis isolates closely related to Bacillus anthracis.</title>
        <authorList>
            <person name="Han C.S."/>
            <person name="Xie G."/>
            <person name="Challacombe J.F."/>
            <person name="Altherr M.R."/>
            <person name="Bhotika S.S."/>
            <person name="Bruce D."/>
            <person name="Campbell C.S."/>
            <person name="Campbell M.L."/>
            <person name="Chen J."/>
            <person name="Chertkov O."/>
            <person name="Cleland C."/>
            <person name="Dimitrijevic M."/>
            <person name="Doggett N.A."/>
            <person name="Fawcett J.J."/>
            <person name="Glavina T."/>
            <person name="Goodwin L.A."/>
            <person name="Hill K.K."/>
            <person name="Hitchcock P."/>
            <person name="Jackson P.J."/>
            <person name="Keim P."/>
            <person name="Kewalramani A.R."/>
            <person name="Longmire J."/>
            <person name="Lucas S."/>
            <person name="Malfatti S."/>
            <person name="McMurry K."/>
            <person name="Meincke L.J."/>
            <person name="Misra M."/>
            <person name="Moseman B.L."/>
            <person name="Mundt M."/>
            <person name="Munk A.C."/>
            <person name="Okinaka R.T."/>
            <person name="Parson-Quintana B."/>
            <person name="Reilly L.P."/>
            <person name="Richardson P."/>
            <person name="Robinson D.L."/>
            <person name="Rubin E."/>
            <person name="Saunders E."/>
            <person name="Tapia R."/>
            <person name="Tesmer J.G."/>
            <person name="Thayer N."/>
            <person name="Thompson L.S."/>
            <person name="Tice H."/>
            <person name="Ticknor L.O."/>
            <person name="Wills P.L."/>
            <person name="Brettin T.S."/>
            <person name="Gilna P."/>
        </authorList>
    </citation>
    <scope>NUCLEOTIDE SEQUENCE [LARGE SCALE GENOMIC DNA]</scope>
    <source>
        <strain>97-27</strain>
    </source>
</reference>
<gene>
    <name evidence="1" type="primary">glmU</name>
    <name type="ordered locus">BT9727_0044</name>
</gene>
<accession>Q6HPW8</accession>
<evidence type="ECO:0000255" key="1">
    <source>
        <dbReference type="HAMAP-Rule" id="MF_01631"/>
    </source>
</evidence>
<comment type="function">
    <text evidence="1">Catalyzes the last two sequential reactions in the de novo biosynthetic pathway for UDP-N-acetylglucosamine (UDP-GlcNAc). The C-terminal domain catalyzes the transfer of acetyl group from acetyl coenzyme A to glucosamine-1-phosphate (GlcN-1-P) to produce N-acetylglucosamine-1-phosphate (GlcNAc-1-P), which is converted into UDP-GlcNAc by the transfer of uridine 5-monophosphate (from uridine 5-triphosphate), a reaction catalyzed by the N-terminal domain.</text>
</comment>
<comment type="catalytic activity">
    <reaction evidence="1">
        <text>alpha-D-glucosamine 1-phosphate + acetyl-CoA = N-acetyl-alpha-D-glucosamine 1-phosphate + CoA + H(+)</text>
        <dbReference type="Rhea" id="RHEA:13725"/>
        <dbReference type="ChEBI" id="CHEBI:15378"/>
        <dbReference type="ChEBI" id="CHEBI:57287"/>
        <dbReference type="ChEBI" id="CHEBI:57288"/>
        <dbReference type="ChEBI" id="CHEBI:57776"/>
        <dbReference type="ChEBI" id="CHEBI:58516"/>
        <dbReference type="EC" id="2.3.1.157"/>
    </reaction>
</comment>
<comment type="catalytic activity">
    <reaction evidence="1">
        <text>N-acetyl-alpha-D-glucosamine 1-phosphate + UTP + H(+) = UDP-N-acetyl-alpha-D-glucosamine + diphosphate</text>
        <dbReference type="Rhea" id="RHEA:13509"/>
        <dbReference type="ChEBI" id="CHEBI:15378"/>
        <dbReference type="ChEBI" id="CHEBI:33019"/>
        <dbReference type="ChEBI" id="CHEBI:46398"/>
        <dbReference type="ChEBI" id="CHEBI:57705"/>
        <dbReference type="ChEBI" id="CHEBI:57776"/>
        <dbReference type="EC" id="2.7.7.23"/>
    </reaction>
</comment>
<comment type="cofactor">
    <cofactor evidence="1">
        <name>Mg(2+)</name>
        <dbReference type="ChEBI" id="CHEBI:18420"/>
    </cofactor>
    <text evidence="1">Binds 1 Mg(2+) ion per subunit.</text>
</comment>
<comment type="pathway">
    <text evidence="1">Nucleotide-sugar biosynthesis; UDP-N-acetyl-alpha-D-glucosamine biosynthesis; N-acetyl-alpha-D-glucosamine 1-phosphate from alpha-D-glucosamine 6-phosphate (route II): step 2/2.</text>
</comment>
<comment type="pathway">
    <text evidence="1">Nucleotide-sugar biosynthesis; UDP-N-acetyl-alpha-D-glucosamine biosynthesis; UDP-N-acetyl-alpha-D-glucosamine from N-acetyl-alpha-D-glucosamine 1-phosphate: step 1/1.</text>
</comment>
<comment type="pathway">
    <text evidence="1">Bacterial outer membrane biogenesis; LPS lipid A biosynthesis.</text>
</comment>
<comment type="subunit">
    <text evidence="1">Homotrimer.</text>
</comment>
<comment type="subcellular location">
    <subcellularLocation>
        <location evidence="1">Cytoplasm</location>
    </subcellularLocation>
</comment>
<comment type="similarity">
    <text evidence="1">In the N-terminal section; belongs to the N-acetylglucosamine-1-phosphate uridyltransferase family.</text>
</comment>
<comment type="similarity">
    <text evidence="1">In the C-terminal section; belongs to the transferase hexapeptide repeat family.</text>
</comment>
<protein>
    <recommendedName>
        <fullName evidence="1">Bifunctional protein GlmU</fullName>
    </recommendedName>
    <domain>
        <recommendedName>
            <fullName evidence="1">UDP-N-acetylglucosamine pyrophosphorylase</fullName>
            <ecNumber evidence="1">2.7.7.23</ecNumber>
        </recommendedName>
        <alternativeName>
            <fullName evidence="1">N-acetylglucosamine-1-phosphate uridyltransferase</fullName>
        </alternativeName>
    </domain>
    <domain>
        <recommendedName>
            <fullName evidence="1">Glucosamine-1-phosphate N-acetyltransferase</fullName>
            <ecNumber evidence="1">2.3.1.157</ecNumber>
        </recommendedName>
    </domain>
</protein>
<organism>
    <name type="scientific">Bacillus thuringiensis subsp. konkukian (strain 97-27)</name>
    <dbReference type="NCBI Taxonomy" id="281309"/>
    <lineage>
        <taxon>Bacteria</taxon>
        <taxon>Bacillati</taxon>
        <taxon>Bacillota</taxon>
        <taxon>Bacilli</taxon>
        <taxon>Bacillales</taxon>
        <taxon>Bacillaceae</taxon>
        <taxon>Bacillus</taxon>
        <taxon>Bacillus cereus group</taxon>
    </lineage>
</organism>
<feature type="chain" id="PRO_0000233733" description="Bifunctional protein GlmU">
    <location>
        <begin position="1"/>
        <end position="459"/>
    </location>
</feature>
<feature type="region of interest" description="Pyrophosphorylase" evidence="1">
    <location>
        <begin position="1"/>
        <end position="230"/>
    </location>
</feature>
<feature type="region of interest" description="Linker" evidence="1">
    <location>
        <begin position="231"/>
        <end position="251"/>
    </location>
</feature>
<feature type="region of interest" description="N-acetyltransferase" evidence="1">
    <location>
        <begin position="252"/>
        <end position="459"/>
    </location>
</feature>
<feature type="active site" description="Proton acceptor" evidence="1">
    <location>
        <position position="363"/>
    </location>
</feature>
<feature type="binding site" evidence="1">
    <location>
        <begin position="9"/>
        <end position="12"/>
    </location>
    <ligand>
        <name>UDP-N-acetyl-alpha-D-glucosamine</name>
        <dbReference type="ChEBI" id="CHEBI:57705"/>
    </ligand>
</feature>
<feature type="binding site" evidence="1">
    <location>
        <position position="23"/>
    </location>
    <ligand>
        <name>UDP-N-acetyl-alpha-D-glucosamine</name>
        <dbReference type="ChEBI" id="CHEBI:57705"/>
    </ligand>
</feature>
<feature type="binding site" evidence="1">
    <location>
        <position position="73"/>
    </location>
    <ligand>
        <name>UDP-N-acetyl-alpha-D-glucosamine</name>
        <dbReference type="ChEBI" id="CHEBI:57705"/>
    </ligand>
</feature>
<feature type="binding site" evidence="1">
    <location>
        <begin position="78"/>
        <end position="79"/>
    </location>
    <ligand>
        <name>UDP-N-acetyl-alpha-D-glucosamine</name>
        <dbReference type="ChEBI" id="CHEBI:57705"/>
    </ligand>
</feature>
<feature type="binding site" evidence="1">
    <location>
        <position position="103"/>
    </location>
    <ligand>
        <name>Mg(2+)</name>
        <dbReference type="ChEBI" id="CHEBI:18420"/>
    </ligand>
</feature>
<feature type="binding site" evidence="1">
    <location>
        <position position="140"/>
    </location>
    <ligand>
        <name>UDP-N-acetyl-alpha-D-glucosamine</name>
        <dbReference type="ChEBI" id="CHEBI:57705"/>
    </ligand>
</feature>
<feature type="binding site" evidence="1">
    <location>
        <position position="155"/>
    </location>
    <ligand>
        <name>UDP-N-acetyl-alpha-D-glucosamine</name>
        <dbReference type="ChEBI" id="CHEBI:57705"/>
    </ligand>
</feature>
<feature type="binding site" evidence="1">
    <location>
        <position position="170"/>
    </location>
    <ligand>
        <name>UDP-N-acetyl-alpha-D-glucosamine</name>
        <dbReference type="ChEBI" id="CHEBI:57705"/>
    </ligand>
</feature>
<feature type="binding site" evidence="1">
    <location>
        <position position="228"/>
    </location>
    <ligand>
        <name>Mg(2+)</name>
        <dbReference type="ChEBI" id="CHEBI:18420"/>
    </ligand>
</feature>
<feature type="binding site" evidence="1">
    <location>
        <position position="228"/>
    </location>
    <ligand>
        <name>UDP-N-acetyl-alpha-D-glucosamine</name>
        <dbReference type="ChEBI" id="CHEBI:57705"/>
    </ligand>
</feature>
<feature type="binding site" evidence="1">
    <location>
        <position position="333"/>
    </location>
    <ligand>
        <name>UDP-N-acetyl-alpha-D-glucosamine</name>
        <dbReference type="ChEBI" id="CHEBI:57705"/>
    </ligand>
</feature>
<feature type="binding site" evidence="1">
    <location>
        <position position="351"/>
    </location>
    <ligand>
        <name>UDP-N-acetyl-alpha-D-glucosamine</name>
        <dbReference type="ChEBI" id="CHEBI:57705"/>
    </ligand>
</feature>
<feature type="binding site" evidence="1">
    <location>
        <position position="366"/>
    </location>
    <ligand>
        <name>UDP-N-acetyl-alpha-D-glucosamine</name>
        <dbReference type="ChEBI" id="CHEBI:57705"/>
    </ligand>
</feature>
<feature type="binding site" evidence="1">
    <location>
        <position position="377"/>
    </location>
    <ligand>
        <name>UDP-N-acetyl-alpha-D-glucosamine</name>
        <dbReference type="ChEBI" id="CHEBI:57705"/>
    </ligand>
</feature>
<feature type="binding site" evidence="1">
    <location>
        <begin position="386"/>
        <end position="387"/>
    </location>
    <ligand>
        <name>acetyl-CoA</name>
        <dbReference type="ChEBI" id="CHEBI:57288"/>
    </ligand>
</feature>
<feature type="binding site" evidence="1">
    <location>
        <position position="423"/>
    </location>
    <ligand>
        <name>acetyl-CoA</name>
        <dbReference type="ChEBI" id="CHEBI:57288"/>
    </ligand>
</feature>
<feature type="binding site" evidence="1">
    <location>
        <position position="440"/>
    </location>
    <ligand>
        <name>acetyl-CoA</name>
        <dbReference type="ChEBI" id="CHEBI:57288"/>
    </ligand>
</feature>
<proteinExistence type="inferred from homology"/>
<sequence length="459" mass="49435">MSNRFAVILAAGKGTRMKSKLYKVLHPVCGKPMVQHVVDQVSQLGLQKLVTVVGHGAEMVQEQLGNVSEFALQAEQLGTAHAVDQAAGVLANEEGTTLVICGDTPLITAETMEALLQQHKEAGAMATVLTAYIEEPAGYGRIVRNENGHVEKIVEHKDANEKELAIKEINTGTYCFDNKALFASLSKVSNDNVQGEYYLPDVIEILKNEGHIVSAYQTEHFDETLGVNDRVALSQAEIIMKNRINRKNMVNGVTIIDPSNTYISADAIIGSDTVLHPGTIIEGNTVIGSDCEIGPHTVIRDSEIGDRTIIRQSTVHDSKLGTEVSVGPFAHIRPDSVIGDEVRVGNFVEIKKTVFGNRSKASHLSYIGDAQVGEDVNLGCGSITVNYDGKNKFKTVIGNGVFIGCNSNLVAPVTVEDGAYVAAGSTITENVPSKALSVARARQVNKEDYVDQLLNKKKS</sequence>
<dbReference type="EC" id="2.7.7.23" evidence="1"/>
<dbReference type="EC" id="2.3.1.157" evidence="1"/>
<dbReference type="EMBL" id="AE017355">
    <property type="protein sequence ID" value="AAT58901.1"/>
    <property type="molecule type" value="Genomic_DNA"/>
</dbReference>
<dbReference type="RefSeq" id="WP_000071030.1">
    <property type="nucleotide sequence ID" value="NC_005957.1"/>
</dbReference>
<dbReference type="RefSeq" id="YP_034402.1">
    <property type="nucleotide sequence ID" value="NC_005957.1"/>
</dbReference>
<dbReference type="SMR" id="Q6HPW8"/>
<dbReference type="KEGG" id="btk:BT9727_0044"/>
<dbReference type="PATRIC" id="fig|281309.8.peg.46"/>
<dbReference type="HOGENOM" id="CLU_029499_15_2_9"/>
<dbReference type="UniPathway" id="UPA00113">
    <property type="reaction ID" value="UER00532"/>
</dbReference>
<dbReference type="UniPathway" id="UPA00113">
    <property type="reaction ID" value="UER00533"/>
</dbReference>
<dbReference type="UniPathway" id="UPA00973"/>
<dbReference type="Proteomes" id="UP000001301">
    <property type="component" value="Chromosome"/>
</dbReference>
<dbReference type="GO" id="GO:0005737">
    <property type="term" value="C:cytoplasm"/>
    <property type="evidence" value="ECO:0007669"/>
    <property type="project" value="UniProtKB-SubCell"/>
</dbReference>
<dbReference type="GO" id="GO:0016020">
    <property type="term" value="C:membrane"/>
    <property type="evidence" value="ECO:0007669"/>
    <property type="project" value="GOC"/>
</dbReference>
<dbReference type="GO" id="GO:0019134">
    <property type="term" value="F:glucosamine-1-phosphate N-acetyltransferase activity"/>
    <property type="evidence" value="ECO:0007669"/>
    <property type="project" value="UniProtKB-UniRule"/>
</dbReference>
<dbReference type="GO" id="GO:0000287">
    <property type="term" value="F:magnesium ion binding"/>
    <property type="evidence" value="ECO:0007669"/>
    <property type="project" value="UniProtKB-UniRule"/>
</dbReference>
<dbReference type="GO" id="GO:0003977">
    <property type="term" value="F:UDP-N-acetylglucosamine diphosphorylase activity"/>
    <property type="evidence" value="ECO:0007669"/>
    <property type="project" value="UniProtKB-UniRule"/>
</dbReference>
<dbReference type="GO" id="GO:0000902">
    <property type="term" value="P:cell morphogenesis"/>
    <property type="evidence" value="ECO:0007669"/>
    <property type="project" value="UniProtKB-UniRule"/>
</dbReference>
<dbReference type="GO" id="GO:0071555">
    <property type="term" value="P:cell wall organization"/>
    <property type="evidence" value="ECO:0007669"/>
    <property type="project" value="UniProtKB-KW"/>
</dbReference>
<dbReference type="GO" id="GO:0009245">
    <property type="term" value="P:lipid A biosynthetic process"/>
    <property type="evidence" value="ECO:0007669"/>
    <property type="project" value="UniProtKB-UniRule"/>
</dbReference>
<dbReference type="GO" id="GO:0009252">
    <property type="term" value="P:peptidoglycan biosynthetic process"/>
    <property type="evidence" value="ECO:0007669"/>
    <property type="project" value="UniProtKB-UniRule"/>
</dbReference>
<dbReference type="GO" id="GO:0008360">
    <property type="term" value="P:regulation of cell shape"/>
    <property type="evidence" value="ECO:0007669"/>
    <property type="project" value="UniProtKB-KW"/>
</dbReference>
<dbReference type="GO" id="GO:0006048">
    <property type="term" value="P:UDP-N-acetylglucosamine biosynthetic process"/>
    <property type="evidence" value="ECO:0007669"/>
    <property type="project" value="UniProtKB-UniPathway"/>
</dbReference>
<dbReference type="CDD" id="cd02540">
    <property type="entry name" value="GT2_GlmU_N_bac"/>
    <property type="match status" value="1"/>
</dbReference>
<dbReference type="CDD" id="cd03353">
    <property type="entry name" value="LbH_GlmU_C"/>
    <property type="match status" value="1"/>
</dbReference>
<dbReference type="FunFam" id="2.160.10.10:FF:000016">
    <property type="entry name" value="Bifunctional protein GlmU"/>
    <property type="match status" value="1"/>
</dbReference>
<dbReference type="FunFam" id="3.90.550.10:FF:000006">
    <property type="entry name" value="Bifunctional protein GlmU"/>
    <property type="match status" value="1"/>
</dbReference>
<dbReference type="Gene3D" id="2.160.10.10">
    <property type="entry name" value="Hexapeptide repeat proteins"/>
    <property type="match status" value="1"/>
</dbReference>
<dbReference type="Gene3D" id="3.90.550.10">
    <property type="entry name" value="Spore Coat Polysaccharide Biosynthesis Protein SpsA, Chain A"/>
    <property type="match status" value="1"/>
</dbReference>
<dbReference type="HAMAP" id="MF_01631">
    <property type="entry name" value="GlmU"/>
    <property type="match status" value="1"/>
</dbReference>
<dbReference type="InterPro" id="IPR005882">
    <property type="entry name" value="Bifunctional_GlmU"/>
</dbReference>
<dbReference type="InterPro" id="IPR050065">
    <property type="entry name" value="GlmU-like"/>
</dbReference>
<dbReference type="InterPro" id="IPR038009">
    <property type="entry name" value="GlmU_C_LbH"/>
</dbReference>
<dbReference type="InterPro" id="IPR001451">
    <property type="entry name" value="Hexapep"/>
</dbReference>
<dbReference type="InterPro" id="IPR018357">
    <property type="entry name" value="Hexapep_transf_CS"/>
</dbReference>
<dbReference type="InterPro" id="IPR005835">
    <property type="entry name" value="NTP_transferase_dom"/>
</dbReference>
<dbReference type="InterPro" id="IPR029044">
    <property type="entry name" value="Nucleotide-diphossugar_trans"/>
</dbReference>
<dbReference type="InterPro" id="IPR011004">
    <property type="entry name" value="Trimer_LpxA-like_sf"/>
</dbReference>
<dbReference type="NCBIfam" id="TIGR01173">
    <property type="entry name" value="glmU"/>
    <property type="match status" value="1"/>
</dbReference>
<dbReference type="NCBIfam" id="NF010934">
    <property type="entry name" value="PRK14354.1"/>
    <property type="match status" value="1"/>
</dbReference>
<dbReference type="PANTHER" id="PTHR43584:SF3">
    <property type="entry name" value="BIFUNCTIONAL PROTEIN GLMU"/>
    <property type="match status" value="1"/>
</dbReference>
<dbReference type="PANTHER" id="PTHR43584">
    <property type="entry name" value="NUCLEOTIDYL TRANSFERASE"/>
    <property type="match status" value="1"/>
</dbReference>
<dbReference type="Pfam" id="PF00132">
    <property type="entry name" value="Hexapep"/>
    <property type="match status" value="3"/>
</dbReference>
<dbReference type="Pfam" id="PF00483">
    <property type="entry name" value="NTP_transferase"/>
    <property type="match status" value="1"/>
</dbReference>
<dbReference type="SUPFAM" id="SSF53448">
    <property type="entry name" value="Nucleotide-diphospho-sugar transferases"/>
    <property type="match status" value="1"/>
</dbReference>
<dbReference type="SUPFAM" id="SSF51161">
    <property type="entry name" value="Trimeric LpxA-like enzymes"/>
    <property type="match status" value="1"/>
</dbReference>
<dbReference type="PROSITE" id="PS00101">
    <property type="entry name" value="HEXAPEP_TRANSFERASES"/>
    <property type="match status" value="1"/>
</dbReference>
<keyword id="KW-0012">Acyltransferase</keyword>
<keyword id="KW-0133">Cell shape</keyword>
<keyword id="KW-0961">Cell wall biogenesis/degradation</keyword>
<keyword id="KW-0963">Cytoplasm</keyword>
<keyword id="KW-0460">Magnesium</keyword>
<keyword id="KW-0479">Metal-binding</keyword>
<keyword id="KW-0511">Multifunctional enzyme</keyword>
<keyword id="KW-0548">Nucleotidyltransferase</keyword>
<keyword id="KW-0573">Peptidoglycan synthesis</keyword>
<keyword id="KW-0677">Repeat</keyword>
<keyword id="KW-0808">Transferase</keyword>